<protein>
    <recommendedName>
        <fullName>Zinc finger CCCH-type with G patch domain-containing protein</fullName>
    </recommendedName>
</protein>
<evidence type="ECO:0000250" key="1"/>
<evidence type="ECO:0000255" key="2">
    <source>
        <dbReference type="PROSITE-ProRule" id="PRU00092"/>
    </source>
</evidence>
<evidence type="ECO:0000255" key="3">
    <source>
        <dbReference type="PROSITE-ProRule" id="PRU00723"/>
    </source>
</evidence>
<evidence type="ECO:0000256" key="4">
    <source>
        <dbReference type="SAM" id="MobiDB-lite"/>
    </source>
</evidence>
<name>ZGPAT_DROPE</name>
<proteinExistence type="inferred from homology"/>
<dbReference type="EMBL" id="CH479180">
    <property type="protein sequence ID" value="EDW28441.1"/>
    <property type="molecule type" value="Genomic_DNA"/>
</dbReference>
<dbReference type="SMR" id="B4G7U3"/>
<dbReference type="STRING" id="7234.B4G7U3"/>
<dbReference type="EnsemblMetazoa" id="FBtr0184564">
    <property type="protein sequence ID" value="FBpp0183056"/>
    <property type="gene ID" value="FBgn0156550"/>
</dbReference>
<dbReference type="EnsemblMetazoa" id="XM_002014409.2">
    <property type="protein sequence ID" value="XP_002014445.1"/>
    <property type="gene ID" value="LOC6589220"/>
</dbReference>
<dbReference type="GeneID" id="6589220"/>
<dbReference type="KEGG" id="dpe:6589220"/>
<dbReference type="eggNOG" id="KOG2185">
    <property type="taxonomic scope" value="Eukaryota"/>
</dbReference>
<dbReference type="HOGENOM" id="CLU_040504_1_0_1"/>
<dbReference type="OMA" id="QYTRGIG"/>
<dbReference type="OrthoDB" id="5842926at2759"/>
<dbReference type="PhylomeDB" id="B4G7U3"/>
<dbReference type="Proteomes" id="UP000008744">
    <property type="component" value="Unassembled WGS sequence"/>
</dbReference>
<dbReference type="GO" id="GO:0005634">
    <property type="term" value="C:nucleus"/>
    <property type="evidence" value="ECO:0007669"/>
    <property type="project" value="UniProtKB-SubCell"/>
</dbReference>
<dbReference type="GO" id="GO:0001227">
    <property type="term" value="F:DNA-binding transcription repressor activity, RNA polymerase II-specific"/>
    <property type="evidence" value="ECO:0007669"/>
    <property type="project" value="TreeGrafter"/>
</dbReference>
<dbReference type="GO" id="GO:0000978">
    <property type="term" value="F:RNA polymerase II cis-regulatory region sequence-specific DNA binding"/>
    <property type="evidence" value="ECO:0007669"/>
    <property type="project" value="TreeGrafter"/>
</dbReference>
<dbReference type="GO" id="GO:0008270">
    <property type="term" value="F:zinc ion binding"/>
    <property type="evidence" value="ECO:0007669"/>
    <property type="project" value="UniProtKB-KW"/>
</dbReference>
<dbReference type="CDD" id="cd20384">
    <property type="entry name" value="Tudor_ZGPAT"/>
    <property type="match status" value="1"/>
</dbReference>
<dbReference type="Gene3D" id="2.30.30.1190">
    <property type="match status" value="1"/>
</dbReference>
<dbReference type="InterPro" id="IPR000467">
    <property type="entry name" value="G_patch_dom"/>
</dbReference>
<dbReference type="InterPro" id="IPR000571">
    <property type="entry name" value="Znf_CCCH"/>
</dbReference>
<dbReference type="PANTHER" id="PTHR46297">
    <property type="entry name" value="ZINC FINGER CCCH-TYPE WITH G PATCH DOMAIN-CONTAINING PROTEIN"/>
    <property type="match status" value="1"/>
</dbReference>
<dbReference type="PANTHER" id="PTHR46297:SF1">
    <property type="entry name" value="ZINC FINGER CCCH-TYPE WITH G PATCH DOMAIN-CONTAINING PROTEIN"/>
    <property type="match status" value="1"/>
</dbReference>
<dbReference type="Pfam" id="PF01585">
    <property type="entry name" value="G-patch"/>
    <property type="match status" value="1"/>
</dbReference>
<dbReference type="SMART" id="SM00443">
    <property type="entry name" value="G_patch"/>
    <property type="match status" value="1"/>
</dbReference>
<dbReference type="PROSITE" id="PS50174">
    <property type="entry name" value="G_PATCH"/>
    <property type="match status" value="1"/>
</dbReference>
<dbReference type="PROSITE" id="PS50103">
    <property type="entry name" value="ZF_C3H1"/>
    <property type="match status" value="1"/>
</dbReference>
<comment type="function">
    <text evidence="1">Transcription repressor.</text>
</comment>
<comment type="subcellular location">
    <subcellularLocation>
        <location evidence="1">Nucleus</location>
    </subcellularLocation>
</comment>
<organism>
    <name type="scientific">Drosophila persimilis</name>
    <name type="common">Fruit fly</name>
    <dbReference type="NCBI Taxonomy" id="7234"/>
    <lineage>
        <taxon>Eukaryota</taxon>
        <taxon>Metazoa</taxon>
        <taxon>Ecdysozoa</taxon>
        <taxon>Arthropoda</taxon>
        <taxon>Hexapoda</taxon>
        <taxon>Insecta</taxon>
        <taxon>Pterygota</taxon>
        <taxon>Neoptera</taxon>
        <taxon>Endopterygota</taxon>
        <taxon>Diptera</taxon>
        <taxon>Brachycera</taxon>
        <taxon>Muscomorpha</taxon>
        <taxon>Ephydroidea</taxon>
        <taxon>Drosophilidae</taxon>
        <taxon>Drosophila</taxon>
        <taxon>Sophophora</taxon>
    </lineage>
</organism>
<sequence length="509" mass="58161">MDEYEAQLVAVEQALENTTDEQQREELSTLRTNLQELLALTRETEADQTAEQGDILDDELLRLKSELNELEEAAANVGATKNKDEEQQLKDLRAKYNALVGEKCSAPHEHSWGALSYHNALICGVDDEVIINRNSELDVRLRVLYINPTHCEMLPCNYYLEGECRFDEIRCRYSHGALVPGASIKSYIPPDFPRLARNCPVLAKMPDRLWHRGRVLCANFVEQTCRVRLDGQDHKERERDFQFEELFPLITEEEDGLTSEDSSSSPHDESSDEIDSDMDDLEAAHRSRMVELSLFTFKPTEKLGAWEQYTRGIGSKLMEKMGYIHGTGLGSEGRGIVTPVSAQILPQGRSLDACMELREAANGDQDYFSVERKLKRAQRRQNKANEKAYARETQRTDVFSFLNGSVLGGGESRHQGDQAAKKAKTNDLQQHSTKTLNVETVRVADDIRRKQRDIAKVKQSLDRNATDIQLQKRLHMQLQSQKQELATLQAHEHRLSKEQHTRKNKMFEF</sequence>
<gene>
    <name type="ORF">GL18949</name>
</gene>
<reference key="1">
    <citation type="journal article" date="2007" name="Nature">
        <title>Evolution of genes and genomes on the Drosophila phylogeny.</title>
        <authorList>
            <consortium name="Drosophila 12 genomes consortium"/>
        </authorList>
    </citation>
    <scope>NUCLEOTIDE SEQUENCE [LARGE SCALE GENOMIC DNA]</scope>
    <source>
        <strain>MSH-3 / Tucson 14011-0111.49</strain>
    </source>
</reference>
<feature type="chain" id="PRO_0000385205" description="Zinc finger CCCH-type with G patch domain-containing protein">
    <location>
        <begin position="1"/>
        <end position="509"/>
    </location>
</feature>
<feature type="domain" description="G-patch" evidence="2">
    <location>
        <begin position="310"/>
        <end position="356"/>
    </location>
</feature>
<feature type="zinc finger region" description="C3H1-type" evidence="3">
    <location>
        <begin position="155"/>
        <end position="178"/>
    </location>
</feature>
<feature type="region of interest" description="Disordered" evidence="4">
    <location>
        <begin position="253"/>
        <end position="277"/>
    </location>
</feature>
<feature type="region of interest" description="Disordered" evidence="4">
    <location>
        <begin position="409"/>
        <end position="430"/>
    </location>
</feature>
<feature type="compositionally biased region" description="Basic and acidic residues" evidence="4">
    <location>
        <begin position="411"/>
        <end position="420"/>
    </location>
</feature>
<accession>B4G7U3</accession>
<keyword id="KW-0238">DNA-binding</keyword>
<keyword id="KW-0479">Metal-binding</keyword>
<keyword id="KW-0539">Nucleus</keyword>
<keyword id="KW-1185">Reference proteome</keyword>
<keyword id="KW-0678">Repressor</keyword>
<keyword id="KW-0804">Transcription</keyword>
<keyword id="KW-0805">Transcription regulation</keyword>
<keyword id="KW-0862">Zinc</keyword>
<keyword id="KW-0863">Zinc-finger</keyword>